<evidence type="ECO:0000250" key="1"/>
<evidence type="ECO:0000269" key="2">
    <source>
    </source>
</evidence>
<evidence type="ECO:0000305" key="3"/>
<accession>P04808</accession>
<accession>Q99936</accession>
<accession>Q9UQJ1</accession>
<organism>
    <name type="scientific">Homo sapiens</name>
    <name type="common">Human</name>
    <dbReference type="NCBI Taxonomy" id="9606"/>
    <lineage>
        <taxon>Eukaryota</taxon>
        <taxon>Metazoa</taxon>
        <taxon>Chordata</taxon>
        <taxon>Craniata</taxon>
        <taxon>Vertebrata</taxon>
        <taxon>Euteleostomi</taxon>
        <taxon>Mammalia</taxon>
        <taxon>Eutheria</taxon>
        <taxon>Euarchontoglires</taxon>
        <taxon>Primates</taxon>
        <taxon>Haplorrhini</taxon>
        <taxon>Catarrhini</taxon>
        <taxon>Hominidae</taxon>
        <taxon>Homo</taxon>
    </lineage>
</organism>
<feature type="signal peptide" evidence="1">
    <location>
        <begin position="1"/>
        <end position="22"/>
    </location>
</feature>
<feature type="peptide" id="PRO_0000016076" description="Relaxin B chain" evidence="1">
    <location>
        <begin position="23"/>
        <end position="53"/>
    </location>
</feature>
<feature type="propeptide" id="PRO_0000016077" description="Connecting peptide" evidence="1">
    <location>
        <begin position="56"/>
        <end position="158"/>
    </location>
</feature>
<feature type="peptide" id="PRO_0000016078" description="Relaxin A chain" evidence="1">
    <location>
        <begin position="163"/>
        <end position="185"/>
    </location>
</feature>
<feature type="disulfide bond" description="Interchain (between B and A chains)" evidence="1">
    <location>
        <begin position="35"/>
        <end position="172"/>
    </location>
</feature>
<feature type="disulfide bond" description="Interchain (between B and A chains)" evidence="1">
    <location>
        <begin position="47"/>
        <end position="185"/>
    </location>
</feature>
<feature type="disulfide bond" evidence="1">
    <location>
        <begin position="171"/>
        <end position="176"/>
    </location>
</feature>
<feature type="splice variant" id="VSP_002709" description="In isoform 2." evidence="3">
    <original>EIVPSFINKDTETIIIMLEFIANLPPELKAALSERQPSLPELQQYVP</original>
    <variation>GDFIQTVSLGISPDGGKALRTGSCFTREFLGALSKLYHPSSTKIQKL</variation>
    <location>
        <begin position="71"/>
        <end position="117"/>
    </location>
</feature>
<feature type="splice variant" id="VSP_002710" description="In isoform 2." evidence="3">
    <location>
        <begin position="118"/>
        <end position="185"/>
    </location>
</feature>
<feature type="sequence variant" id="VAR_011962" description="In dbSNP:rs397780021.">
    <original>K</original>
    <variation>M</variation>
    <location>
        <position position="28"/>
    </location>
</feature>
<dbReference type="EMBL" id="X00949">
    <property type="protein sequence ID" value="CAA25461.1"/>
    <property type="molecule type" value="mRNA"/>
</dbReference>
<dbReference type="EMBL" id="V00578">
    <property type="protein sequence ID" value="CAA23839.1"/>
    <property type="molecule type" value="Genomic_DNA"/>
</dbReference>
<dbReference type="EMBL" id="V00577">
    <property type="protein sequence ID" value="CAA23838.1"/>
    <property type="molecule type" value="Genomic_DNA"/>
</dbReference>
<dbReference type="EMBL" id="AL135786">
    <property type="status" value="NOT_ANNOTATED_CDS"/>
    <property type="molecule type" value="Genomic_DNA"/>
</dbReference>
<dbReference type="EMBL" id="BC005956">
    <property type="protein sequence ID" value="AAH05956.1"/>
    <property type="molecule type" value="mRNA"/>
</dbReference>
<dbReference type="EMBL" id="S83200">
    <property type="protein sequence ID" value="AAD14429.1"/>
    <property type="molecule type" value="Genomic_DNA"/>
</dbReference>
<dbReference type="EMBL" id="AF104934">
    <property type="protein sequence ID" value="AAD21967.1"/>
    <property type="molecule type" value="Genomic_DNA"/>
</dbReference>
<dbReference type="CCDS" id="CCDS6462.1">
    <molecule id="P04808-1"/>
</dbReference>
<dbReference type="PIR" id="B05092">
    <property type="entry name" value="A44559"/>
</dbReference>
<dbReference type="RefSeq" id="NP_008842.1">
    <molecule id="P04808-1"/>
    <property type="nucleotide sequence ID" value="NM_006911.4"/>
</dbReference>
<dbReference type="RefSeq" id="XP_016870498.1">
    <property type="nucleotide sequence ID" value="XM_017015009.1"/>
</dbReference>
<dbReference type="RefSeq" id="XP_047279659.1">
    <molecule id="P04808-2"/>
    <property type="nucleotide sequence ID" value="XM_047423703.1"/>
</dbReference>
<dbReference type="RefSeq" id="XP_054219467.1">
    <molecule id="P04808-2"/>
    <property type="nucleotide sequence ID" value="XM_054363492.1"/>
</dbReference>
<dbReference type="SMR" id="P04808"/>
<dbReference type="BioGRID" id="111945">
    <property type="interactions" value="97"/>
</dbReference>
<dbReference type="FunCoup" id="P04808">
    <property type="interactions" value="500"/>
</dbReference>
<dbReference type="IntAct" id="P04808">
    <property type="interactions" value="91"/>
</dbReference>
<dbReference type="STRING" id="9606.ENSP00000223862"/>
<dbReference type="iPTMnet" id="P04808"/>
<dbReference type="PhosphoSitePlus" id="P04808"/>
<dbReference type="BioMuta" id="RLN1"/>
<dbReference type="DMDM" id="132280"/>
<dbReference type="MassIVE" id="P04808"/>
<dbReference type="PaxDb" id="9606-ENSP00000223862"/>
<dbReference type="PeptideAtlas" id="P04808"/>
<dbReference type="Antibodypedia" id="24129">
    <property type="antibodies" value="271 antibodies from 28 providers"/>
</dbReference>
<dbReference type="DNASU" id="6013"/>
<dbReference type="Ensembl" id="ENST00000223862.2">
    <molecule id="P04808-1"/>
    <property type="protein sequence ID" value="ENSP00000223862.1"/>
    <property type="gene ID" value="ENSG00000107018.8"/>
</dbReference>
<dbReference type="GeneID" id="6013"/>
<dbReference type="KEGG" id="hsa:6013"/>
<dbReference type="MANE-Select" id="ENST00000223862.2">
    <property type="protein sequence ID" value="ENSP00000223862.1"/>
    <property type="RefSeq nucleotide sequence ID" value="NM_006911.4"/>
    <property type="RefSeq protein sequence ID" value="NP_008842.1"/>
</dbReference>
<dbReference type="UCSC" id="uc003zjb.3">
    <molecule id="P04808-1"/>
    <property type="organism name" value="human"/>
</dbReference>
<dbReference type="AGR" id="HGNC:10026"/>
<dbReference type="CTD" id="6013"/>
<dbReference type="DisGeNET" id="6013"/>
<dbReference type="GeneCards" id="RLN1"/>
<dbReference type="HGNC" id="HGNC:10026">
    <property type="gene designation" value="RLN1"/>
</dbReference>
<dbReference type="HPA" id="ENSG00000107018">
    <property type="expression patterns" value="Tissue enriched (prostate)"/>
</dbReference>
<dbReference type="MIM" id="179730">
    <property type="type" value="gene"/>
</dbReference>
<dbReference type="neXtProt" id="NX_P04808"/>
<dbReference type="OpenTargets" id="ENSG00000107018"/>
<dbReference type="PharmGKB" id="PA34399"/>
<dbReference type="VEuPathDB" id="HostDB:ENSG00000107018"/>
<dbReference type="eggNOG" id="ENOG502TH8D">
    <property type="taxonomic scope" value="Eukaryota"/>
</dbReference>
<dbReference type="GeneTree" id="ENSGT00940000154434"/>
<dbReference type="HOGENOM" id="CLU_115657_0_0_1"/>
<dbReference type="InParanoid" id="P04808"/>
<dbReference type="OMA" id="KCCLIGC"/>
<dbReference type="OrthoDB" id="8784777at2759"/>
<dbReference type="PAN-GO" id="P04808">
    <property type="GO annotations" value="0 GO annotations based on evolutionary models"/>
</dbReference>
<dbReference type="PhylomeDB" id="P04808"/>
<dbReference type="TreeFam" id="TF333404"/>
<dbReference type="PathwayCommons" id="P04808"/>
<dbReference type="SignaLink" id="P04808"/>
<dbReference type="BioGRID-ORCS" id="6013">
    <property type="hits" value="9 hits in 1127 CRISPR screens"/>
</dbReference>
<dbReference type="ChiTaRS" id="RLN1">
    <property type="organism name" value="human"/>
</dbReference>
<dbReference type="GenomeRNAi" id="6013"/>
<dbReference type="Pharos" id="P04808">
    <property type="development level" value="Tbio"/>
</dbReference>
<dbReference type="PRO" id="PR:P04808"/>
<dbReference type="Proteomes" id="UP000005640">
    <property type="component" value="Chromosome 9"/>
</dbReference>
<dbReference type="RNAct" id="P04808">
    <property type="molecule type" value="protein"/>
</dbReference>
<dbReference type="Bgee" id="ENSG00000107018">
    <property type="expression patterns" value="Expressed in oocyte and 104 other cell types or tissues"/>
</dbReference>
<dbReference type="GO" id="GO:0005576">
    <property type="term" value="C:extracellular region"/>
    <property type="evidence" value="ECO:0007669"/>
    <property type="project" value="UniProtKB-SubCell"/>
</dbReference>
<dbReference type="GO" id="GO:0005179">
    <property type="term" value="F:hormone activity"/>
    <property type="evidence" value="ECO:0000304"/>
    <property type="project" value="ProtInc"/>
</dbReference>
<dbReference type="GO" id="GO:0007565">
    <property type="term" value="P:female pregnancy"/>
    <property type="evidence" value="ECO:0000303"/>
    <property type="project" value="ProtInc"/>
</dbReference>
<dbReference type="GO" id="GO:0007165">
    <property type="term" value="P:signal transduction"/>
    <property type="evidence" value="ECO:0000303"/>
    <property type="project" value="ProtInc"/>
</dbReference>
<dbReference type="CDD" id="cd04365">
    <property type="entry name" value="IlGF_relaxin_like"/>
    <property type="match status" value="1"/>
</dbReference>
<dbReference type="Gene3D" id="1.10.100.10">
    <property type="entry name" value="Insulin-like"/>
    <property type="match status" value="1"/>
</dbReference>
<dbReference type="InterPro" id="IPR016179">
    <property type="entry name" value="Insulin-like"/>
</dbReference>
<dbReference type="InterPro" id="IPR036438">
    <property type="entry name" value="Insulin-like_sf"/>
</dbReference>
<dbReference type="InterPro" id="IPR022353">
    <property type="entry name" value="Insulin_CS"/>
</dbReference>
<dbReference type="InterPro" id="IPR022352">
    <property type="entry name" value="Insulin_family"/>
</dbReference>
<dbReference type="InterPro" id="IPR022421">
    <property type="entry name" value="Relaxin"/>
</dbReference>
<dbReference type="InterPro" id="IPR051042">
    <property type="entry name" value="Repro_Hormone_Insulin-like"/>
</dbReference>
<dbReference type="PANTHER" id="PTHR12004:SF14">
    <property type="entry name" value="PRORELAXIN H1"/>
    <property type="match status" value="1"/>
</dbReference>
<dbReference type="PANTHER" id="PTHR12004">
    <property type="entry name" value="RELAXIN"/>
    <property type="match status" value="1"/>
</dbReference>
<dbReference type="Pfam" id="PF00049">
    <property type="entry name" value="Insulin"/>
    <property type="match status" value="1"/>
</dbReference>
<dbReference type="PRINTS" id="PR00276">
    <property type="entry name" value="INSULINFAMLY"/>
</dbReference>
<dbReference type="PRINTS" id="PR02004">
    <property type="entry name" value="RELAXIN"/>
</dbReference>
<dbReference type="SMART" id="SM00078">
    <property type="entry name" value="IlGF"/>
    <property type="match status" value="1"/>
</dbReference>
<dbReference type="SUPFAM" id="SSF56994">
    <property type="entry name" value="Insulin-like"/>
    <property type="match status" value="1"/>
</dbReference>
<dbReference type="PROSITE" id="PS00262">
    <property type="entry name" value="INSULIN"/>
    <property type="match status" value="1"/>
</dbReference>
<sequence length="185" mass="21146">MPRLFLFHLLEFCLLLNQFSRAVAAKWKDDVIKLCGRELVRAQIAICGMSTWSKRSLSQEDAPQTPRPVAEIVPSFINKDTETIIIMLEFIANLPPELKAALSERQPSLPELQQYVPALKDSNLSFEEFKKLIRNRQSEAADSNPSELKYLGLDTHSQKKRRPYVALFEKCCLIGCTKRSLAKYC</sequence>
<comment type="function">
    <text>Relaxin is an ovarian hormone that acts with estrogen to produce dilatation of the birth canal in many mammals. May be involved in remodeling of connective tissues during pregnancy, promoting growth of pubic ligaments and ripening of the cervix.</text>
</comment>
<comment type="subunit">
    <text>Heterodimer of a B chain and an A chain linked by two disulfide bonds.</text>
</comment>
<comment type="interaction">
    <interactant intactId="EBI-12071382">
        <id>P04808</id>
    </interactant>
    <interactant intactId="EBI-5916454">
        <id>A6NEM1</id>
        <label>GOLGA6L9</label>
    </interactant>
    <organismsDiffer>false</organismsDiffer>
    <experiments>3</experiments>
</comment>
<comment type="interaction">
    <interactant intactId="EBI-12071382">
        <id>P04808</id>
    </interactant>
    <interactant intactId="EBI-10172526">
        <id>Q9UJV3-2</id>
        <label>MID2</label>
    </interactant>
    <organismsDiffer>false</organismsDiffer>
    <experiments>3</experiments>
</comment>
<comment type="subcellular location">
    <subcellularLocation>
        <location>Secreted</location>
    </subcellularLocation>
</comment>
<comment type="alternative products">
    <event type="alternative splicing"/>
    <isoform>
        <id>P04808-1</id>
        <name>1</name>
        <sequence type="displayed"/>
    </isoform>
    <isoform>
        <id>P04808-2</id>
        <name>2</name>
        <sequence type="described" ref="VSP_002709 VSP_002710"/>
    </isoform>
</comment>
<comment type="tissue specificity">
    <text evidence="2">Prostate. Not expressed in placenta, decidua or ovary.</text>
</comment>
<comment type="similarity">
    <text evidence="3">Belongs to the insulin family.</text>
</comment>
<proteinExistence type="evidence at protein level"/>
<protein>
    <recommendedName>
        <fullName>Prorelaxin H1</fullName>
    </recommendedName>
    <component>
        <recommendedName>
            <fullName>Relaxin B chain</fullName>
        </recommendedName>
    </component>
    <component>
        <recommendedName>
            <fullName>Relaxin A chain</fullName>
        </recommendedName>
    </component>
</protein>
<reference key="1">
    <citation type="journal article" date="1984" name="EMBO J.">
        <title>Relaxin gene expression in human ovaries and the predicted structure of a human preprorelaxin by analysis of cDNA clones.</title>
        <authorList>
            <person name="Hudson P."/>
            <person name="John M."/>
            <person name="Crawford R."/>
            <person name="Haralambidis J."/>
            <person name="Scanlon D."/>
            <person name="Gorman J."/>
            <person name="Tregear G."/>
            <person name="Shine J."/>
            <person name="Niall H."/>
        </authorList>
    </citation>
    <scope>NUCLEOTIDE SEQUENCE [MRNA] (ISOFORM 1)</scope>
</reference>
<reference key="2">
    <citation type="journal article" date="1983" name="Nature">
        <title>Structure of a genomic clone encoding biologically active human relaxin.</title>
        <authorList>
            <person name="Hudson P."/>
            <person name="Haley J."/>
            <person name="John M."/>
            <person name="Cronk M."/>
            <person name="Crawford R."/>
            <person name="Haralambidis J."/>
            <person name="Tregear G."/>
            <person name="Shine J."/>
            <person name="Niall H."/>
        </authorList>
    </citation>
    <scope>NUCLEOTIDE SEQUENCE [GENOMIC DNA]</scope>
</reference>
<reference key="3">
    <citation type="journal article" date="2004" name="Nature">
        <title>DNA sequence and analysis of human chromosome 9.</title>
        <authorList>
            <person name="Humphray S.J."/>
            <person name="Oliver K."/>
            <person name="Hunt A.R."/>
            <person name="Plumb R.W."/>
            <person name="Loveland J.E."/>
            <person name="Howe K.L."/>
            <person name="Andrews T.D."/>
            <person name="Searle S."/>
            <person name="Hunt S.E."/>
            <person name="Scott C.E."/>
            <person name="Jones M.C."/>
            <person name="Ainscough R."/>
            <person name="Almeida J.P."/>
            <person name="Ambrose K.D."/>
            <person name="Ashwell R.I.S."/>
            <person name="Babbage A.K."/>
            <person name="Babbage S."/>
            <person name="Bagguley C.L."/>
            <person name="Bailey J."/>
            <person name="Banerjee R."/>
            <person name="Barker D.J."/>
            <person name="Barlow K.F."/>
            <person name="Bates K."/>
            <person name="Beasley H."/>
            <person name="Beasley O."/>
            <person name="Bird C.P."/>
            <person name="Bray-Allen S."/>
            <person name="Brown A.J."/>
            <person name="Brown J.Y."/>
            <person name="Burford D."/>
            <person name="Burrill W."/>
            <person name="Burton J."/>
            <person name="Carder C."/>
            <person name="Carter N.P."/>
            <person name="Chapman J.C."/>
            <person name="Chen Y."/>
            <person name="Clarke G."/>
            <person name="Clark S.Y."/>
            <person name="Clee C.M."/>
            <person name="Clegg S."/>
            <person name="Collier R.E."/>
            <person name="Corby N."/>
            <person name="Crosier M."/>
            <person name="Cummings A.T."/>
            <person name="Davies J."/>
            <person name="Dhami P."/>
            <person name="Dunn M."/>
            <person name="Dutta I."/>
            <person name="Dyer L.W."/>
            <person name="Earthrowl M.E."/>
            <person name="Faulkner L."/>
            <person name="Fleming C.J."/>
            <person name="Frankish A."/>
            <person name="Frankland J.A."/>
            <person name="French L."/>
            <person name="Fricker D.G."/>
            <person name="Garner P."/>
            <person name="Garnett J."/>
            <person name="Ghori J."/>
            <person name="Gilbert J.G.R."/>
            <person name="Glison C."/>
            <person name="Grafham D.V."/>
            <person name="Gribble S."/>
            <person name="Griffiths C."/>
            <person name="Griffiths-Jones S."/>
            <person name="Grocock R."/>
            <person name="Guy J."/>
            <person name="Hall R.E."/>
            <person name="Hammond S."/>
            <person name="Harley J.L."/>
            <person name="Harrison E.S.I."/>
            <person name="Hart E.A."/>
            <person name="Heath P.D."/>
            <person name="Henderson C.D."/>
            <person name="Hopkins B.L."/>
            <person name="Howard P.J."/>
            <person name="Howden P.J."/>
            <person name="Huckle E."/>
            <person name="Johnson C."/>
            <person name="Johnson D."/>
            <person name="Joy A.A."/>
            <person name="Kay M."/>
            <person name="Keenan S."/>
            <person name="Kershaw J.K."/>
            <person name="Kimberley A.M."/>
            <person name="King A."/>
            <person name="Knights A."/>
            <person name="Laird G.K."/>
            <person name="Langford C."/>
            <person name="Lawlor S."/>
            <person name="Leongamornlert D.A."/>
            <person name="Leversha M."/>
            <person name="Lloyd C."/>
            <person name="Lloyd D.M."/>
            <person name="Lovell J."/>
            <person name="Martin S."/>
            <person name="Mashreghi-Mohammadi M."/>
            <person name="Matthews L."/>
            <person name="McLaren S."/>
            <person name="McLay K.E."/>
            <person name="McMurray A."/>
            <person name="Milne S."/>
            <person name="Nickerson T."/>
            <person name="Nisbett J."/>
            <person name="Nordsiek G."/>
            <person name="Pearce A.V."/>
            <person name="Peck A.I."/>
            <person name="Porter K.M."/>
            <person name="Pandian R."/>
            <person name="Pelan S."/>
            <person name="Phillimore B."/>
            <person name="Povey S."/>
            <person name="Ramsey Y."/>
            <person name="Rand V."/>
            <person name="Scharfe M."/>
            <person name="Sehra H.K."/>
            <person name="Shownkeen R."/>
            <person name="Sims S.K."/>
            <person name="Skuce C.D."/>
            <person name="Smith M."/>
            <person name="Steward C.A."/>
            <person name="Swarbreck D."/>
            <person name="Sycamore N."/>
            <person name="Tester J."/>
            <person name="Thorpe A."/>
            <person name="Tracey A."/>
            <person name="Tromans A."/>
            <person name="Thomas D.W."/>
            <person name="Wall M."/>
            <person name="Wallis J.M."/>
            <person name="West A.P."/>
            <person name="Whitehead S.L."/>
            <person name="Willey D.L."/>
            <person name="Williams S.A."/>
            <person name="Wilming L."/>
            <person name="Wray P.W."/>
            <person name="Young L."/>
            <person name="Ashurst J.L."/>
            <person name="Coulson A."/>
            <person name="Blocker H."/>
            <person name="Durbin R.M."/>
            <person name="Sulston J.E."/>
            <person name="Hubbard T."/>
            <person name="Jackson M.J."/>
            <person name="Bentley D.R."/>
            <person name="Beck S."/>
            <person name="Rogers J."/>
            <person name="Dunham I."/>
        </authorList>
    </citation>
    <scope>NUCLEOTIDE SEQUENCE [LARGE SCALE GENOMIC DNA]</scope>
</reference>
<reference key="4">
    <citation type="journal article" date="2004" name="Genome Res.">
        <title>The status, quality, and expansion of the NIH full-length cDNA project: the Mammalian Gene Collection (MGC).</title>
        <authorList>
            <consortium name="The MGC Project Team"/>
        </authorList>
    </citation>
    <scope>NUCLEOTIDE SEQUENCE [LARGE SCALE MRNA] (ISOFORM 1)</scope>
    <source>
        <tissue>Prostate</tissue>
    </source>
</reference>
<reference key="5">
    <citation type="journal article" date="1996" name="Mol. Cell. Endocrinol.">
        <title>Expression of human relaxin genes: characterization of a novel alternatively-spliced human relaxin mRNA species.</title>
        <authorList>
            <person name="Gunnersen J.M."/>
            <person name="Fu P."/>
            <person name="Roche P.J."/>
            <person name="Tregear G.W."/>
        </authorList>
    </citation>
    <scope>PARTIAL NUCLEOTIDE SEQUENCE [GENOMIC DNA]</scope>
    <scope>ALTERNATIVE SPLICING</scope>
    <scope>TISSUE SPECIFICITY</scope>
    <source>
        <tissue>Prostate</tissue>
    </source>
</reference>
<reference key="6">
    <citation type="journal article" date="1999" name="J. Mol. Endocrinol.">
        <title>Analysis of the 5'-upstream regions of the human relaxin H1 and H2 genes and their chromosomal localization on chromosome 9p24.1 by radiation hybrid and breakpoint mapping.</title>
        <authorList>
            <person name="Garibay-Tupas J.L."/>
            <person name="Csiszar K."/>
            <person name="Fox M."/>
            <person name="Povey S."/>
            <person name="Bryant-Greenwood G.D."/>
        </authorList>
    </citation>
    <scope>NUCLEOTIDE SEQUENCE [GENOMIC DNA] OF 1-11</scope>
</reference>
<name>REL1_HUMAN</name>
<keyword id="KW-0025">Alternative splicing</keyword>
<keyword id="KW-0165">Cleavage on pair of basic residues</keyword>
<keyword id="KW-1015">Disulfide bond</keyword>
<keyword id="KW-0372">Hormone</keyword>
<keyword id="KW-1267">Proteomics identification</keyword>
<keyword id="KW-1185">Reference proteome</keyword>
<keyword id="KW-0964">Secreted</keyword>
<keyword id="KW-0732">Signal</keyword>
<gene>
    <name type="primary">RLN1</name>
</gene>